<proteinExistence type="evidence at protein level"/>
<protein>
    <recommendedName>
        <fullName>Transposon Ty2-OR2 Gag-Pol polyprotein</fullName>
    </recommendedName>
    <alternativeName>
        <fullName>TY2A-TY2B</fullName>
    </alternativeName>
    <alternativeName>
        <fullName>Transposon Ty2 TYA-TYB polyprotein</fullName>
    </alternativeName>
    <component>
        <recommendedName>
            <fullName>Capsid protein</fullName>
            <shortName>CA</shortName>
        </recommendedName>
    </component>
    <component>
        <recommendedName>
            <fullName>Ty2 protease</fullName>
            <shortName>PR</shortName>
            <ecNumber>3.4.23.-</ecNumber>
        </recommendedName>
    </component>
    <component>
        <recommendedName>
            <fullName>Integrase</fullName>
            <shortName>IN</shortName>
        </recommendedName>
    </component>
    <component>
        <recommendedName>
            <fullName>Reverse transcriptase/ribonuclease H</fullName>
            <shortName>RT</shortName>
            <shortName>RT-RH</shortName>
            <ecNumber>2.7.7.49</ecNumber>
            <ecNumber>2.7.7.7</ecNumber>
            <ecNumber>3.1.26.4</ecNumber>
        </recommendedName>
    </component>
</protein>
<feature type="chain" id="PRO_0000279348" description="Transposon Ty2-OR2 Gag-Pol polyprotein">
    <location>
        <begin position="1"/>
        <end position="1770"/>
    </location>
</feature>
<feature type="chain" id="PRO_0000279349" description="Capsid protein" evidence="1">
    <location>
        <begin position="1"/>
        <end position="397"/>
    </location>
</feature>
<feature type="chain" id="PRO_0000279350" description="Ty2 protease" evidence="1">
    <location>
        <begin position="398"/>
        <end position="578"/>
    </location>
</feature>
<feature type="chain" id="PRO_0000279351" description="Integrase" evidence="1">
    <location>
        <begin position="579"/>
        <end position="1232"/>
    </location>
</feature>
<feature type="chain" id="PRO_0000279352" description="Reverse transcriptase/ribonuclease H" evidence="1">
    <location>
        <begin position="1233"/>
        <end position="1770"/>
    </location>
</feature>
<feature type="domain" description="Integrase catalytic" evidence="2">
    <location>
        <begin position="656"/>
        <end position="831"/>
    </location>
</feature>
<feature type="domain" description="Reverse transcriptase Ty1/copia-type">
    <location>
        <begin position="1353"/>
        <end position="1491"/>
    </location>
</feature>
<feature type="domain" description="RNase H Ty1/copia-type">
    <location>
        <begin position="1625"/>
        <end position="1767"/>
    </location>
</feature>
<feature type="region of interest" description="Disordered" evidence="3">
    <location>
        <begin position="1"/>
        <end position="88"/>
    </location>
</feature>
<feature type="region of interest" description="RNA-binding" evidence="1">
    <location>
        <begin position="295"/>
        <end position="397"/>
    </location>
</feature>
<feature type="region of interest" description="Disordered" evidence="3">
    <location>
        <begin position="359"/>
        <end position="449"/>
    </location>
</feature>
<feature type="region of interest" description="Integrase-type zinc finger-like">
    <location>
        <begin position="579"/>
        <end position="636"/>
    </location>
</feature>
<feature type="region of interest" description="Disordered" evidence="3">
    <location>
        <begin position="1005"/>
        <end position="1038"/>
    </location>
</feature>
<feature type="region of interest" description="Disordered" evidence="3">
    <location>
        <begin position="1057"/>
        <end position="1135"/>
    </location>
</feature>
<feature type="region of interest" description="Disordered" evidence="3">
    <location>
        <begin position="1146"/>
        <end position="1165"/>
    </location>
</feature>
<feature type="region of interest" description="Disordered" evidence="3">
    <location>
        <begin position="1170"/>
        <end position="1205"/>
    </location>
</feature>
<feature type="short sequence motif" description="Bipartite nuclear localization signal" evidence="1">
    <location>
        <begin position="1193"/>
        <end position="1227"/>
    </location>
</feature>
<feature type="compositionally biased region" description="Polar residues" evidence="3">
    <location>
        <begin position="19"/>
        <end position="39"/>
    </location>
</feature>
<feature type="compositionally biased region" description="Polar residues" evidence="3">
    <location>
        <begin position="49"/>
        <end position="60"/>
    </location>
</feature>
<feature type="compositionally biased region" description="Low complexity" evidence="3">
    <location>
        <begin position="369"/>
        <end position="381"/>
    </location>
</feature>
<feature type="compositionally biased region" description="Polar residues" evidence="3">
    <location>
        <begin position="399"/>
        <end position="408"/>
    </location>
</feature>
<feature type="compositionally biased region" description="Polar residues" evidence="3">
    <location>
        <begin position="415"/>
        <end position="435"/>
    </location>
</feature>
<feature type="compositionally biased region" description="Polar residues" evidence="3">
    <location>
        <begin position="1009"/>
        <end position="1024"/>
    </location>
</feature>
<feature type="compositionally biased region" description="Polar residues" evidence="3">
    <location>
        <begin position="1065"/>
        <end position="1082"/>
    </location>
</feature>
<feature type="compositionally biased region" description="Basic and acidic residues" evidence="3">
    <location>
        <begin position="1151"/>
        <end position="1165"/>
    </location>
</feature>
<feature type="active site" description="For protease activity; shared with dimeric partner" evidence="1">
    <location>
        <position position="457"/>
    </location>
</feature>
<feature type="binding site" evidence="2">
    <location>
        <position position="667"/>
    </location>
    <ligand>
        <name>Mg(2+)</name>
        <dbReference type="ChEBI" id="CHEBI:18420"/>
        <label>1</label>
        <note>catalytic; for integrase activity</note>
    </ligand>
</feature>
<feature type="binding site" evidence="2">
    <location>
        <position position="732"/>
    </location>
    <ligand>
        <name>Mg(2+)</name>
        <dbReference type="ChEBI" id="CHEBI:18420"/>
        <label>1</label>
        <note>catalytic; for integrase activity</note>
    </ligand>
</feature>
<feature type="binding site" evidence="2">
    <location>
        <position position="1361"/>
    </location>
    <ligand>
        <name>Mg(2+)</name>
        <dbReference type="ChEBI" id="CHEBI:18420"/>
        <label>2</label>
        <note>catalytic; for reverse transcriptase activity</note>
    </ligand>
</feature>
<feature type="binding site" evidence="2">
    <location>
        <position position="1442"/>
    </location>
    <ligand>
        <name>Mg(2+)</name>
        <dbReference type="ChEBI" id="CHEBI:18420"/>
        <label>2</label>
        <note>catalytic; for reverse transcriptase activity</note>
    </ligand>
</feature>
<feature type="binding site" evidence="2">
    <location>
        <position position="1443"/>
    </location>
    <ligand>
        <name>Mg(2+)</name>
        <dbReference type="ChEBI" id="CHEBI:18420"/>
        <label>2</label>
        <note>catalytic; for reverse transcriptase activity</note>
    </ligand>
</feature>
<feature type="binding site" evidence="2">
    <location>
        <position position="1625"/>
    </location>
    <ligand>
        <name>Mg(2+)</name>
        <dbReference type="ChEBI" id="CHEBI:18420"/>
        <label>3</label>
        <note>catalytic; for RNase H activity</note>
    </ligand>
</feature>
<feature type="binding site" evidence="2">
    <location>
        <position position="1667"/>
    </location>
    <ligand>
        <name>Mg(2+)</name>
        <dbReference type="ChEBI" id="CHEBI:18420"/>
        <label>3</label>
        <note>catalytic; for RNase H activity</note>
    </ligand>
</feature>
<feature type="binding site" evidence="2">
    <location>
        <position position="1700"/>
    </location>
    <ligand>
        <name>Mg(2+)</name>
        <dbReference type="ChEBI" id="CHEBI:18420"/>
        <label>3</label>
        <note>catalytic; for RNase H activity</note>
    </ligand>
</feature>
<feature type="site" description="Cleavage; by Ty2 protease" evidence="1">
    <location>
        <begin position="397"/>
        <end position="398"/>
    </location>
</feature>
<feature type="site" description="Cleavage; by Ty2 protease" evidence="1">
    <location>
        <begin position="578"/>
        <end position="579"/>
    </location>
</feature>
<feature type="site" description="Cleavage; by Ty2 protease" evidence="1">
    <location>
        <begin position="1232"/>
        <end position="1233"/>
    </location>
</feature>
<reference key="1">
    <citation type="journal article" date="1997" name="Nature">
        <title>The nucleotide sequence of Saccharomyces cerevisiae chromosome XV.</title>
        <authorList>
            <person name="Dujon B."/>
            <person name="Albermann K."/>
            <person name="Aldea M."/>
            <person name="Alexandraki D."/>
            <person name="Ansorge W."/>
            <person name="Arino J."/>
            <person name="Benes V."/>
            <person name="Bohn C."/>
            <person name="Bolotin-Fukuhara M."/>
            <person name="Bordonne R."/>
            <person name="Boyer J."/>
            <person name="Camasses A."/>
            <person name="Casamayor A."/>
            <person name="Casas C."/>
            <person name="Cheret G."/>
            <person name="Cziepluch C."/>
            <person name="Daignan-Fornier B."/>
            <person name="Dang V.-D."/>
            <person name="de Haan M."/>
            <person name="Delius H."/>
            <person name="Durand P."/>
            <person name="Fairhead C."/>
            <person name="Feldmann H."/>
            <person name="Gaillon L."/>
            <person name="Galisson F."/>
            <person name="Gamo F.-J."/>
            <person name="Gancedo C."/>
            <person name="Goffeau A."/>
            <person name="Goulding S.E."/>
            <person name="Grivell L.A."/>
            <person name="Habbig B."/>
            <person name="Hand N.J."/>
            <person name="Hani J."/>
            <person name="Hattenhorst U."/>
            <person name="Hebling U."/>
            <person name="Hernando Y."/>
            <person name="Herrero E."/>
            <person name="Heumann K."/>
            <person name="Hiesel R."/>
            <person name="Hilger F."/>
            <person name="Hofmann B."/>
            <person name="Hollenberg C.P."/>
            <person name="Hughes B."/>
            <person name="Jauniaux J.-C."/>
            <person name="Kalogeropoulos A."/>
            <person name="Katsoulou C."/>
            <person name="Kordes E."/>
            <person name="Lafuente M.J."/>
            <person name="Landt O."/>
            <person name="Louis E.J."/>
            <person name="Maarse A.C."/>
            <person name="Madania A."/>
            <person name="Mannhaupt G."/>
            <person name="Marck C."/>
            <person name="Martin R.P."/>
            <person name="Mewes H.-W."/>
            <person name="Michaux G."/>
            <person name="Paces V."/>
            <person name="Parle-McDermott A.G."/>
            <person name="Pearson B.M."/>
            <person name="Perrin A."/>
            <person name="Pettersson B."/>
            <person name="Poch O."/>
            <person name="Pohl T.M."/>
            <person name="Poirey R."/>
            <person name="Portetelle D."/>
            <person name="Pujol A."/>
            <person name="Purnelle B."/>
            <person name="Ramezani Rad M."/>
            <person name="Rechmann S."/>
            <person name="Schwager C."/>
            <person name="Schweizer M."/>
            <person name="Sor F."/>
            <person name="Sterky F."/>
            <person name="Tarassov I.A."/>
            <person name="Teodoru C."/>
            <person name="Tettelin H."/>
            <person name="Thierry A."/>
            <person name="Tobiasch E."/>
            <person name="Tzermia M."/>
            <person name="Uhlen M."/>
            <person name="Unseld M."/>
            <person name="Valens M."/>
            <person name="Vandenbol M."/>
            <person name="Vetter I."/>
            <person name="Vlcek C."/>
            <person name="Voet M."/>
            <person name="Volckaert G."/>
            <person name="Voss H."/>
            <person name="Wambutt R."/>
            <person name="Wedler H."/>
            <person name="Wiemann S."/>
            <person name="Winsor B."/>
            <person name="Wolfe K.H."/>
            <person name="Zollner A."/>
            <person name="Zumstein E."/>
            <person name="Kleine K."/>
        </authorList>
    </citation>
    <scope>NUCLEOTIDE SEQUENCE [LARGE SCALE GENOMIC DNA]</scope>
    <source>
        <strain>ATCC 204508 / S288c</strain>
    </source>
</reference>
<reference key="2">
    <citation type="journal article" date="2014" name="G3 (Bethesda)">
        <title>The reference genome sequence of Saccharomyces cerevisiae: Then and now.</title>
        <authorList>
            <person name="Engel S.R."/>
            <person name="Dietrich F.S."/>
            <person name="Fisk D.G."/>
            <person name="Binkley G."/>
            <person name="Balakrishnan R."/>
            <person name="Costanzo M.C."/>
            <person name="Dwight S.S."/>
            <person name="Hitz B.C."/>
            <person name="Karra K."/>
            <person name="Nash R.S."/>
            <person name="Weng S."/>
            <person name="Wong E.D."/>
            <person name="Lloyd P."/>
            <person name="Skrzypek M.S."/>
            <person name="Miyasato S.R."/>
            <person name="Simison M."/>
            <person name="Cherry J.M."/>
        </authorList>
    </citation>
    <scope>GENOME REANNOTATION</scope>
    <source>
        <strain>ATCC 204508 / S288c</strain>
    </source>
</reference>
<reference key="3">
    <citation type="journal article" date="1998" name="Genome Res.">
        <title>Transposable elements and genome organization: a comprehensive survey of retrotransposons revealed by the complete Saccharomyces cerevisiae genome sequence.</title>
        <authorList>
            <person name="Kim J.M."/>
            <person name="Vanguri S."/>
            <person name="Boeke J.D."/>
            <person name="Gabriel A."/>
            <person name="Voytas D.F."/>
        </authorList>
    </citation>
    <scope>NOMENCLATURE</scope>
</reference>
<reference key="4">
    <citation type="journal article" date="2005" name="Cytogenet. Genome Res.">
        <title>Happy together: the life and times of Ty retrotransposons and their hosts.</title>
        <authorList>
            <person name="Lesage P."/>
            <person name="Todeschini A.L."/>
        </authorList>
    </citation>
    <scope>REVIEW</scope>
</reference>
<reference key="5">
    <citation type="journal article" date="2007" name="J. Proteome Res.">
        <title>Large-scale phosphorylation analysis of alpha-factor-arrested Saccharomyces cerevisiae.</title>
        <authorList>
            <person name="Li X."/>
            <person name="Gerber S.A."/>
            <person name="Rudner A.D."/>
            <person name="Beausoleil S.A."/>
            <person name="Haas W."/>
            <person name="Villen J."/>
            <person name="Elias J.E."/>
            <person name="Gygi S.P."/>
        </authorList>
    </citation>
    <scope>IDENTIFICATION BY MASS SPECTROMETRY [LARGE SCALE ANALYSIS]</scope>
    <source>
        <strain>ADR376</strain>
    </source>
</reference>
<evidence type="ECO:0000250" key="1"/>
<evidence type="ECO:0000255" key="2">
    <source>
        <dbReference type="PROSITE-ProRule" id="PRU00457"/>
    </source>
</evidence>
<evidence type="ECO:0000256" key="3">
    <source>
        <dbReference type="SAM" id="MobiDB-lite"/>
    </source>
</evidence>
<evidence type="ECO:0000305" key="4"/>
<sequence>MESQQLHQNPHCPHGSAYASVTSKEVPSNQDPLAVSASNLPEFDRDSTKVNSQEETTPGTSAVPENHHHVSPQPASVPPPQNGQYQQHGMMTPNKAMASNWAHYQQPSMMTCSHYQTSPAYYQPDPHYPLPQYIPPLSTSSPDPIDSQDQHSEVPQAKTKVRNNVLPPHPHTSEENFSTWVKFYIRFLKNSNLGDIIPNDQGEIKRQMTYEEHAYIYNTFQAFAPFHLLPTWVKQILEINYSDILTVLCKSVSKMQTNNQELKDWIALANLEYNGSTSADTFEITVSTIIQRLKENNINVSDRLACQLILKGLSGDFKYLRNQYRTKTNMKLSQLFAEIQLIYDENKIMNLNKPSQYKQHSEYKNVSRTSPNTTNTKVTTRNYHRTNSSKPRAAKAHNIATSSKFSRVNNDHINESTVSSQYLSDDNELSLGQQQKESKPTRTIDSNDELPDHLLIDSGASQTLVRSAHYLHHATPNSEINIVDAQKQDIPINAIGNLHFNFQNGTKTSIKALHTPNIAYDLLSLSELTNQNITACFTRNTLERSDGTVLAPIVKHGDFYWLSKKYLIPSHISKLTINNVNKSKSVNKYPYPLIHRMLGHANFRSIQKSLKKNAVTYLKESDIEWSNASTYQCPDCLIGKSTKHRHVKGSRLKYQESYEPFQYLHTDIFGPVHHLPKSAPSYFISFTDEKTRFQWVYPLHDRREESILNVFTSILAFIKNQFNARVLVIQMDRGSEYTNKTLHKFFTNRGITACYTTTADSRAHGVAERLNRTLLNDCRTLLHCSGLPNHLWFSAVEFSTIIRNSLVSPKNDKSARQHAGLAGLDITTILPFGQPVIVNNHNPDSKIHPRGIPGYALHPSRNSYGYIIYLPSLKKTVDTTNYVILQNNQTKLDQFDYDTLTFDDDLNRLTAHNQSFIEQNETEQSYDQNTESDHDYQSEIEINSDPLVNDFSSQSLNPLQLDKEPVQKVRAPKEVDADISEYNILPSTIRSRTPHIINKESTEMGGTIESDTTSPRHSSTFTARNQKRPGSPNDMIDLTSQDRVNYGLENIKTTRLGGTEEPYIQRNSDTNIKYRTTNSTPSIDDRSSNSDSTTPIISIETKAACDNTPSIDTDPPEYRSSDHATPNIMPDKSSKNVTADSILDDLPLPDLTHKSPTDTSDVSKDIPHIHSRQTNSSLGGMDDSNVLTTTKSKKRSLEDNETEIEVSRDTWNNKNMRSLEPPRSKKRINLIAAIKGVKSIKPVRTTLRYDEAITYNKDNKEKDRYVEAYHKEISQLLKMNTWDTNKYYDRNDIDPKKVINSMFIFNKKRDGTHKARFVARGDIQHPDTYDSDMQSNTVHHYALMTSLSIALDNDYYITQLDISSAYLYADIKEELYIRPPPHLGLNDKLLRLRKSLYGLKQSGANWYETIKSYLINCCDMQEVRGWSCVFKNSQVTICLFVDDMILFSKDLNANKKIITTLKKQYDTKIINLGEGDNEIQYDILGLEIKYQRSKYMKLGMEKSLTEKLPKLNVPLNPKGKKLRAPGQPGHYIDQDELEIDEDEYKEKVHEMQKLIGLASYVGYKFRFDLLYYINTLAQHILFPSRQVLDMTYELIQFMWDTRDKQLIWHKNKPTKPDNKLVAISDASYGNQPYYKSQIGNIFLLNGKVIGGKSTKASLTCTSTTEAEIHAVSEAIPLLNNLSHLVQELNKKPIIKGLLTDSRSTISIIKSTNEEKFRNRFFGTKAMRLRDEVSGNNLYVYYIETKKNIADVMTKPLPIKTFKLLTNKWIH</sequence>
<keyword id="KW-0064">Aspartyl protease</keyword>
<keyword id="KW-0067">ATP-binding</keyword>
<keyword id="KW-0963">Cytoplasm</keyword>
<keyword id="KW-0229">DNA integration</keyword>
<keyword id="KW-0233">DNA recombination</keyword>
<keyword id="KW-0238">DNA-binding</keyword>
<keyword id="KW-0239">DNA-directed DNA polymerase</keyword>
<keyword id="KW-0255">Endonuclease</keyword>
<keyword id="KW-0378">Hydrolase</keyword>
<keyword id="KW-0460">Magnesium</keyword>
<keyword id="KW-0479">Metal-binding</keyword>
<keyword id="KW-0511">Multifunctional enzyme</keyword>
<keyword id="KW-0540">Nuclease</keyword>
<keyword id="KW-0547">Nucleotide-binding</keyword>
<keyword id="KW-0548">Nucleotidyltransferase</keyword>
<keyword id="KW-0539">Nucleus</keyword>
<keyword id="KW-0645">Protease</keyword>
<keyword id="KW-1185">Reference proteome</keyword>
<keyword id="KW-0688">Ribosomal frameshifting</keyword>
<keyword id="KW-0694">RNA-binding</keyword>
<keyword id="KW-0695">RNA-directed DNA polymerase</keyword>
<keyword id="KW-0808">Transferase</keyword>
<keyword id="KW-0814">Transposable element</keyword>
<keyword id="KW-0815">Transposition</keyword>
<keyword id="KW-1188">Viral release from host cell</keyword>
<keyword id="KW-0917">Virion maturation</keyword>
<keyword id="KW-0862">Zinc</keyword>
<keyword id="KW-0863">Zinc-finger</keyword>
<dbReference type="EC" id="3.4.23.-"/>
<dbReference type="EC" id="2.7.7.49"/>
<dbReference type="EC" id="2.7.7.7"/>
<dbReference type="EC" id="3.1.26.4"/>
<dbReference type="EMBL" id="Z75251">
    <property type="protein sequence ID" value="CAA99667.1"/>
    <property type="molecule type" value="Genomic_DNA"/>
</dbReference>
<dbReference type="EMBL" id="Z75252">
    <property type="protein sequence ID" value="CAA99670.1"/>
    <property type="molecule type" value="Genomic_DNA"/>
</dbReference>
<dbReference type="EMBL" id="BK006948">
    <property type="protein sequence ID" value="DAA11104.1"/>
    <property type="status" value="ALT_SEQ"/>
    <property type="molecule type" value="Genomic_DNA"/>
</dbReference>
<dbReference type="PIR" id="S70233">
    <property type="entry name" value="S70233"/>
</dbReference>
<dbReference type="RefSeq" id="NP_620389.3">
    <property type="nucleotide sequence ID" value="NM_001184390.4"/>
</dbReference>
<dbReference type="FunCoup" id="Q12501">
    <property type="interactions" value="57"/>
</dbReference>
<dbReference type="MEROPS" id="A11.003"/>
<dbReference type="GlyGen" id="Q12501">
    <property type="glycosylation" value="1 site, 1 O-linked glycan (1 site)"/>
</dbReference>
<dbReference type="iPTMnet" id="Q12501"/>
<dbReference type="PaxDb" id="4932-YOR343W-B"/>
<dbReference type="PeptideAtlas" id="Q12501"/>
<dbReference type="GeneID" id="854523"/>
<dbReference type="KEGG" id="sce:YOR343W-B"/>
<dbReference type="AGR" id="SGD:S000007356"/>
<dbReference type="SGD" id="S000007356">
    <property type="gene designation" value="YOR343W-B"/>
</dbReference>
<dbReference type="eggNOG" id="KOG0017">
    <property type="taxonomic scope" value="Eukaryota"/>
</dbReference>
<dbReference type="HOGENOM" id="CLU_244151_0_0_1"/>
<dbReference type="InParanoid" id="Q12501"/>
<dbReference type="OrthoDB" id="4046078at2759"/>
<dbReference type="Proteomes" id="UP000002311">
    <property type="component" value="Chromosome XV"/>
</dbReference>
<dbReference type="RNAct" id="Q12501">
    <property type="molecule type" value="protein"/>
</dbReference>
<dbReference type="GO" id="GO:0005737">
    <property type="term" value="C:cytoplasm"/>
    <property type="evidence" value="ECO:0007669"/>
    <property type="project" value="UniProtKB-SubCell"/>
</dbReference>
<dbReference type="GO" id="GO:0005634">
    <property type="term" value="C:nucleus"/>
    <property type="evidence" value="ECO:0000314"/>
    <property type="project" value="SGD"/>
</dbReference>
<dbReference type="GO" id="GO:0004190">
    <property type="term" value="F:aspartic-type endopeptidase activity"/>
    <property type="evidence" value="ECO:0007669"/>
    <property type="project" value="UniProtKB-KW"/>
</dbReference>
<dbReference type="GO" id="GO:0005524">
    <property type="term" value="F:ATP binding"/>
    <property type="evidence" value="ECO:0007669"/>
    <property type="project" value="UniProtKB-KW"/>
</dbReference>
<dbReference type="GO" id="GO:0003677">
    <property type="term" value="F:DNA binding"/>
    <property type="evidence" value="ECO:0007669"/>
    <property type="project" value="UniProtKB-KW"/>
</dbReference>
<dbReference type="GO" id="GO:0003887">
    <property type="term" value="F:DNA-directed DNA polymerase activity"/>
    <property type="evidence" value="ECO:0007669"/>
    <property type="project" value="UniProtKB-KW"/>
</dbReference>
<dbReference type="GO" id="GO:0003723">
    <property type="term" value="F:RNA binding"/>
    <property type="evidence" value="ECO:0007669"/>
    <property type="project" value="UniProtKB-KW"/>
</dbReference>
<dbReference type="GO" id="GO:0003964">
    <property type="term" value="F:RNA-directed DNA polymerase activity"/>
    <property type="evidence" value="ECO:0007669"/>
    <property type="project" value="UniProtKB-KW"/>
</dbReference>
<dbReference type="GO" id="GO:0004523">
    <property type="term" value="F:RNA-DNA hybrid ribonuclease activity"/>
    <property type="evidence" value="ECO:0007669"/>
    <property type="project" value="UniProtKB-EC"/>
</dbReference>
<dbReference type="GO" id="GO:0008270">
    <property type="term" value="F:zinc ion binding"/>
    <property type="evidence" value="ECO:0007669"/>
    <property type="project" value="UniProtKB-KW"/>
</dbReference>
<dbReference type="GO" id="GO:0015074">
    <property type="term" value="P:DNA integration"/>
    <property type="evidence" value="ECO:0007669"/>
    <property type="project" value="UniProtKB-KW"/>
</dbReference>
<dbReference type="GO" id="GO:0006310">
    <property type="term" value="P:DNA recombination"/>
    <property type="evidence" value="ECO:0007669"/>
    <property type="project" value="UniProtKB-KW"/>
</dbReference>
<dbReference type="GO" id="GO:0006508">
    <property type="term" value="P:proteolysis"/>
    <property type="evidence" value="ECO:0007669"/>
    <property type="project" value="UniProtKB-KW"/>
</dbReference>
<dbReference type="GO" id="GO:0032196">
    <property type="term" value="P:transposition"/>
    <property type="evidence" value="ECO:0007669"/>
    <property type="project" value="UniProtKB-KW"/>
</dbReference>
<dbReference type="GO" id="GO:0075523">
    <property type="term" value="P:viral translational frameshifting"/>
    <property type="evidence" value="ECO:0007669"/>
    <property type="project" value="UniProtKB-KW"/>
</dbReference>
<dbReference type="CDD" id="cd09272">
    <property type="entry name" value="RNase_HI_RT_Ty1"/>
    <property type="match status" value="1"/>
</dbReference>
<dbReference type="FunFam" id="3.30.420.10:FF:000050">
    <property type="entry name" value="Transposon Ty2-DR3 Gag-Pol polyprotein"/>
    <property type="match status" value="1"/>
</dbReference>
<dbReference type="Gene3D" id="3.30.420.10">
    <property type="entry name" value="Ribonuclease H-like superfamily/Ribonuclease H"/>
    <property type="match status" value="1"/>
</dbReference>
<dbReference type="InterPro" id="IPR043502">
    <property type="entry name" value="DNA/RNA_pol_sf"/>
</dbReference>
<dbReference type="InterPro" id="IPR001584">
    <property type="entry name" value="Integrase_cat-core"/>
</dbReference>
<dbReference type="InterPro" id="IPR054722">
    <property type="entry name" value="PolX-like_BBD"/>
</dbReference>
<dbReference type="InterPro" id="IPR039537">
    <property type="entry name" value="Retrotran_Ty1/copia-like"/>
</dbReference>
<dbReference type="InterPro" id="IPR012337">
    <property type="entry name" value="RNaseH-like_sf"/>
</dbReference>
<dbReference type="InterPro" id="IPR036397">
    <property type="entry name" value="RNaseH_sf"/>
</dbReference>
<dbReference type="InterPro" id="IPR013103">
    <property type="entry name" value="RVT_2"/>
</dbReference>
<dbReference type="InterPro" id="IPR015820">
    <property type="entry name" value="TYA"/>
</dbReference>
<dbReference type="PANTHER" id="PTHR42648">
    <property type="entry name" value="TRANSPOSASE, PUTATIVE-RELATED"/>
    <property type="match status" value="1"/>
</dbReference>
<dbReference type="PANTHER" id="PTHR42648:SF11">
    <property type="entry name" value="TRANSPOSON TY4-P GAG-POL POLYPROTEIN"/>
    <property type="match status" value="1"/>
</dbReference>
<dbReference type="Pfam" id="PF22936">
    <property type="entry name" value="Pol_BBD"/>
    <property type="match status" value="1"/>
</dbReference>
<dbReference type="Pfam" id="PF00665">
    <property type="entry name" value="rve"/>
    <property type="match status" value="1"/>
</dbReference>
<dbReference type="Pfam" id="PF07727">
    <property type="entry name" value="RVT_2"/>
    <property type="match status" value="1"/>
</dbReference>
<dbReference type="Pfam" id="PF01021">
    <property type="entry name" value="TYA"/>
    <property type="match status" value="1"/>
</dbReference>
<dbReference type="SUPFAM" id="SSF56672">
    <property type="entry name" value="DNA/RNA polymerases"/>
    <property type="match status" value="1"/>
</dbReference>
<dbReference type="SUPFAM" id="SSF53098">
    <property type="entry name" value="Ribonuclease H-like"/>
    <property type="match status" value="1"/>
</dbReference>
<dbReference type="PROSITE" id="PS50994">
    <property type="entry name" value="INTEGRASE"/>
    <property type="match status" value="1"/>
</dbReference>
<comment type="function">
    <text evidence="1">Capsid protein (CA) is the structural component of the virus-like particle (VLP), forming the shell that encapsulates the retrotransposons dimeric RNA genome. The particles are assembled from trimer-clustered units and there are holes in the capsid shells that allow for the diffusion of macromolecules. CA also has nucleocapsid-like chaperone activity, promoting primer tRNA(i)-Met annealing to the multipartite primer-binding site (PBS), dimerization of Ty2 RNA and initiation of reverse transcription (By similarity).</text>
</comment>
<comment type="function">
    <text evidence="1">The aspartyl protease (PR) mediates the proteolytic cleavages of the Gag and Gag-Pol polyproteins after assembly of the VLP.</text>
</comment>
<comment type="function">
    <text evidence="1">Reverse transcriptase/ribonuclease H (RT) is a multifunctional enzyme that catalyzes the conversion of the retro-elements RNA genome into dsDNA within the VLP. The enzyme displays a DNA polymerase activity that can copy either DNA or RNA templates, and a ribonuclease H (RNase H) activity that cleaves the RNA strand of RNA-DNA heteroduplexes during plus-strand synthesis and hydrolyzes RNA primers. The conversion leads to a linear dsDNA copy of the retrotransposon that includes long terminal repeats (LTRs) at both ends (By similarity).</text>
</comment>
<comment type="function">
    <text evidence="1">Integrase (IN) targets the VLP to the nucleus, where a subparticle preintegration complex (PIC) containing at least integrase and the newly synthesized dsDNA copy of the retrotransposon must transit the nuclear membrane. Once in the nucleus, integrase performs the integration of the dsDNA into the host genome (By similarity).</text>
</comment>
<comment type="catalytic activity">
    <reaction>
        <text>DNA(n) + a 2'-deoxyribonucleoside 5'-triphosphate = DNA(n+1) + diphosphate</text>
        <dbReference type="Rhea" id="RHEA:22508"/>
        <dbReference type="Rhea" id="RHEA-COMP:17339"/>
        <dbReference type="Rhea" id="RHEA-COMP:17340"/>
        <dbReference type="ChEBI" id="CHEBI:33019"/>
        <dbReference type="ChEBI" id="CHEBI:61560"/>
        <dbReference type="ChEBI" id="CHEBI:173112"/>
        <dbReference type="EC" id="2.7.7.49"/>
    </reaction>
</comment>
<comment type="catalytic activity">
    <reaction>
        <text>DNA(n) + a 2'-deoxyribonucleoside 5'-triphosphate = DNA(n+1) + diphosphate</text>
        <dbReference type="Rhea" id="RHEA:22508"/>
        <dbReference type="Rhea" id="RHEA-COMP:17339"/>
        <dbReference type="Rhea" id="RHEA-COMP:17340"/>
        <dbReference type="ChEBI" id="CHEBI:33019"/>
        <dbReference type="ChEBI" id="CHEBI:61560"/>
        <dbReference type="ChEBI" id="CHEBI:173112"/>
        <dbReference type="EC" id="2.7.7.7"/>
    </reaction>
</comment>
<comment type="catalytic activity">
    <reaction>
        <text>Endonucleolytic cleavage to 5'-phosphomonoester.</text>
        <dbReference type="EC" id="3.1.26.4"/>
    </reaction>
</comment>
<comment type="subunit">
    <text evidence="1">The capsid protein forms a homotrimer, from which the VLPs are assembled. The protease is a homodimer, whose active site consists of two apposed aspartic acid residues (By similarity).</text>
</comment>
<comment type="subcellular location">
    <subcellularLocation>
        <location>Cytoplasm</location>
    </subcellularLocation>
    <subcellularLocation>
        <location evidence="1">Nucleus</location>
    </subcellularLocation>
</comment>
<comment type="alternative products">
    <event type="ribosomal frameshifting"/>
    <isoform>
        <id>Q12501-1</id>
        <name>Transposon Ty2-OR2 Gag-Pol polyprotein</name>
        <sequence type="displayed"/>
    </isoform>
    <isoform>
        <id>Q12293-1</id>
        <name>Transposon Ty2-OR2 Gag polyprotein</name>
        <sequence type="external"/>
    </isoform>
    <text>The Gag-Pol polyprotein is generated by a +1 ribosomal frameshift.</text>
</comment>
<comment type="domain">
    <text evidence="1">The C-terminal RNA-binding region of CA is sufficient for all its nucleocapsid-like chaperone activities.</text>
</comment>
<comment type="domain">
    <text evidence="1">Integrase core domain contains the D-x(n)-D-x(35)-E motif, named for the phylogenetically conserved glutamic acid and aspartic acid residues and the invariant 35 amino acid spacing between the second and third acidic residues. Each acidic residue of the D,D(35)E motif is independently essential for the 3'-processing and strand transfer activities of purified integrase protein (By similarity).</text>
</comment>
<comment type="PTM">
    <text evidence="1">Initially, virus-like particles (VLPs) are composed of the structural unprocessed proteins Gag and Gag-Pol, and also contain the host initiator methionine tRNA (tRNA(i)-Met) which serves as a primer for minus-strand DNA synthesis, and a dimer of genomic Ty RNA. Processing of the polyproteins occurs within the particle and proceeds by an ordered pathway, called maturation. First, the protease (PR) is released by autocatalytic cleavage of the Gag-Pol polyprotein, and this cleavage is a prerequisite for subsequent processing at the remaining sites to release the mature structural and catalytic proteins. Maturation takes place prior to the RT reaction and is required to produce transposition-competent VLPs (By similarity).</text>
</comment>
<comment type="miscellaneous">
    <text>Retrotransposons are mobile genetic entities that are able to replicate via an RNA intermediate and a reverse transcription step. In contrast to retroviruses, retrotransposons are non-infectious, lack an envelope and remain intracellular. Ty2 retrotransposons belong to the copia elements (pseudoviridae).</text>
</comment>
<comment type="miscellaneous">
    <molecule>Isoform Transposon Ty2-OR2 Gag-Pol polyprotein</molecule>
    <text>Produced by +1 ribosomal frameshifting between codon Leu-431 and Gly-432 of the YOR343W-A ORF.</text>
</comment>
<comment type="sequence caution" evidence="4">
    <conflict type="erroneous gene model prediction">
        <sequence resource="EMBL-CDS" id="DAA11104"/>
    </conflict>
</comment>
<gene>
    <name type="primary">TY2B-OR2</name>
    <name type="synonym">YORWTy2-2 POL</name>
    <name type="ordered locus">YOR343W-B</name>
    <name type="ORF">O6304</name>
</gene>
<name>YO22B_YEAST</name>
<organism>
    <name type="scientific">Saccharomyces cerevisiae (strain ATCC 204508 / S288c)</name>
    <name type="common">Baker's yeast</name>
    <dbReference type="NCBI Taxonomy" id="559292"/>
    <lineage>
        <taxon>Eukaryota</taxon>
        <taxon>Fungi</taxon>
        <taxon>Dikarya</taxon>
        <taxon>Ascomycota</taxon>
        <taxon>Saccharomycotina</taxon>
        <taxon>Saccharomycetes</taxon>
        <taxon>Saccharomycetales</taxon>
        <taxon>Saccharomycetaceae</taxon>
        <taxon>Saccharomyces</taxon>
    </lineage>
</organism>
<accession>Q12501</accession>
<accession>D6W338</accession>